<sequence length="464" mass="51378">MAKVISQDTFDDVVKENVVEFSMTPSEAKEETIKQFEAQGINLANIIKDLSVNPQTGQPVINETVDKIKEHIGQKLEETTELLEQLATLDAECKKSLAHRVLAGKNGAHDALITLLEETLSAESPNESVLKKSLEAINSLTHKQPDLFDAEAMAVVLKLLALKVESEEVTLLTLQWLQKACIMHEMNRQNIMNTSALKLMKPLLGKGKDRLVRELTAVFRFLVLDDDIRVEFGCAHEHARQIAGEVLITLVELLPAYQDPNVLADLLLTIGTLAVRQELCTAIDEAGGLKSVFEIMSSNLDEVRLNREALKLLRALAGQDSVKSHIVQQGVAPIIKQLLETHQSNENIVAAALACVTTLTLRVQEHSAAFFDTGIAEVIVEALRAHPKHKIVQRNGAWAIRNMVSRSRNQCETWISFGVEDLLNMAMKEHPSVEQDIKAALRDLGCSVHLREEWTGTAEKKIAA</sequence>
<accession>Q7K486</accession>
<comment type="similarity">
    <text evidence="2">Belongs to the ARMC6 family.</text>
</comment>
<organism>
    <name type="scientific">Drosophila melanogaster</name>
    <name type="common">Fruit fly</name>
    <dbReference type="NCBI Taxonomy" id="7227"/>
    <lineage>
        <taxon>Eukaryota</taxon>
        <taxon>Metazoa</taxon>
        <taxon>Ecdysozoa</taxon>
        <taxon>Arthropoda</taxon>
        <taxon>Hexapoda</taxon>
        <taxon>Insecta</taxon>
        <taxon>Pterygota</taxon>
        <taxon>Neoptera</taxon>
        <taxon>Endopterygota</taxon>
        <taxon>Diptera</taxon>
        <taxon>Brachycera</taxon>
        <taxon>Muscomorpha</taxon>
        <taxon>Ephydroidea</taxon>
        <taxon>Drosophilidae</taxon>
        <taxon>Drosophila</taxon>
        <taxon>Sophophora</taxon>
    </lineage>
</organism>
<protein>
    <recommendedName>
        <fullName>Armadillo repeat-containing protein 6 homolog</fullName>
    </recommendedName>
</protein>
<proteinExistence type="evidence at protein level"/>
<reference key="1">
    <citation type="journal article" date="2000" name="Science">
        <title>The genome sequence of Drosophila melanogaster.</title>
        <authorList>
            <person name="Adams M.D."/>
            <person name="Celniker S.E."/>
            <person name="Holt R.A."/>
            <person name="Evans C.A."/>
            <person name="Gocayne J.D."/>
            <person name="Amanatides P.G."/>
            <person name="Scherer S.E."/>
            <person name="Li P.W."/>
            <person name="Hoskins R.A."/>
            <person name="Galle R.F."/>
            <person name="George R.A."/>
            <person name="Lewis S.E."/>
            <person name="Richards S."/>
            <person name="Ashburner M."/>
            <person name="Henderson S.N."/>
            <person name="Sutton G.G."/>
            <person name="Wortman J.R."/>
            <person name="Yandell M.D."/>
            <person name="Zhang Q."/>
            <person name="Chen L.X."/>
            <person name="Brandon R.C."/>
            <person name="Rogers Y.-H.C."/>
            <person name="Blazej R.G."/>
            <person name="Champe M."/>
            <person name="Pfeiffer B.D."/>
            <person name="Wan K.H."/>
            <person name="Doyle C."/>
            <person name="Baxter E.G."/>
            <person name="Helt G."/>
            <person name="Nelson C.R."/>
            <person name="Miklos G.L.G."/>
            <person name="Abril J.F."/>
            <person name="Agbayani A."/>
            <person name="An H.-J."/>
            <person name="Andrews-Pfannkoch C."/>
            <person name="Baldwin D."/>
            <person name="Ballew R.M."/>
            <person name="Basu A."/>
            <person name="Baxendale J."/>
            <person name="Bayraktaroglu L."/>
            <person name="Beasley E.M."/>
            <person name="Beeson K.Y."/>
            <person name="Benos P.V."/>
            <person name="Berman B.P."/>
            <person name="Bhandari D."/>
            <person name="Bolshakov S."/>
            <person name="Borkova D."/>
            <person name="Botchan M.R."/>
            <person name="Bouck J."/>
            <person name="Brokstein P."/>
            <person name="Brottier P."/>
            <person name="Burtis K.C."/>
            <person name="Busam D.A."/>
            <person name="Butler H."/>
            <person name="Cadieu E."/>
            <person name="Center A."/>
            <person name="Chandra I."/>
            <person name="Cherry J.M."/>
            <person name="Cawley S."/>
            <person name="Dahlke C."/>
            <person name="Davenport L.B."/>
            <person name="Davies P."/>
            <person name="de Pablos B."/>
            <person name="Delcher A."/>
            <person name="Deng Z."/>
            <person name="Mays A.D."/>
            <person name="Dew I."/>
            <person name="Dietz S.M."/>
            <person name="Dodson K."/>
            <person name="Doup L.E."/>
            <person name="Downes M."/>
            <person name="Dugan-Rocha S."/>
            <person name="Dunkov B.C."/>
            <person name="Dunn P."/>
            <person name="Durbin K.J."/>
            <person name="Evangelista C.C."/>
            <person name="Ferraz C."/>
            <person name="Ferriera S."/>
            <person name="Fleischmann W."/>
            <person name="Fosler C."/>
            <person name="Gabrielian A.E."/>
            <person name="Garg N.S."/>
            <person name="Gelbart W.M."/>
            <person name="Glasser K."/>
            <person name="Glodek A."/>
            <person name="Gong F."/>
            <person name="Gorrell J.H."/>
            <person name="Gu Z."/>
            <person name="Guan P."/>
            <person name="Harris M."/>
            <person name="Harris N.L."/>
            <person name="Harvey D.A."/>
            <person name="Heiman T.J."/>
            <person name="Hernandez J.R."/>
            <person name="Houck J."/>
            <person name="Hostin D."/>
            <person name="Houston K.A."/>
            <person name="Howland T.J."/>
            <person name="Wei M.-H."/>
            <person name="Ibegwam C."/>
            <person name="Jalali M."/>
            <person name="Kalush F."/>
            <person name="Karpen G.H."/>
            <person name="Ke Z."/>
            <person name="Kennison J.A."/>
            <person name="Ketchum K.A."/>
            <person name="Kimmel B.E."/>
            <person name="Kodira C.D."/>
            <person name="Kraft C.L."/>
            <person name="Kravitz S."/>
            <person name="Kulp D."/>
            <person name="Lai Z."/>
            <person name="Lasko P."/>
            <person name="Lei Y."/>
            <person name="Levitsky A.A."/>
            <person name="Li J.H."/>
            <person name="Li Z."/>
            <person name="Liang Y."/>
            <person name="Lin X."/>
            <person name="Liu X."/>
            <person name="Mattei B."/>
            <person name="McIntosh T.C."/>
            <person name="McLeod M.P."/>
            <person name="McPherson D."/>
            <person name="Merkulov G."/>
            <person name="Milshina N.V."/>
            <person name="Mobarry C."/>
            <person name="Morris J."/>
            <person name="Moshrefi A."/>
            <person name="Mount S.M."/>
            <person name="Moy M."/>
            <person name="Murphy B."/>
            <person name="Murphy L."/>
            <person name="Muzny D.M."/>
            <person name="Nelson D.L."/>
            <person name="Nelson D.R."/>
            <person name="Nelson K.A."/>
            <person name="Nixon K."/>
            <person name="Nusskern D.R."/>
            <person name="Pacleb J.M."/>
            <person name="Palazzolo M."/>
            <person name="Pittman G.S."/>
            <person name="Pan S."/>
            <person name="Pollard J."/>
            <person name="Puri V."/>
            <person name="Reese M.G."/>
            <person name="Reinert K."/>
            <person name="Remington K."/>
            <person name="Saunders R.D.C."/>
            <person name="Scheeler F."/>
            <person name="Shen H."/>
            <person name="Shue B.C."/>
            <person name="Siden-Kiamos I."/>
            <person name="Simpson M."/>
            <person name="Skupski M.P."/>
            <person name="Smith T.J."/>
            <person name="Spier E."/>
            <person name="Spradling A.C."/>
            <person name="Stapleton M."/>
            <person name="Strong R."/>
            <person name="Sun E."/>
            <person name="Svirskas R."/>
            <person name="Tector C."/>
            <person name="Turner R."/>
            <person name="Venter E."/>
            <person name="Wang A.H."/>
            <person name="Wang X."/>
            <person name="Wang Z.-Y."/>
            <person name="Wassarman D.A."/>
            <person name="Weinstock G.M."/>
            <person name="Weissenbach J."/>
            <person name="Williams S.M."/>
            <person name="Woodage T."/>
            <person name="Worley K.C."/>
            <person name="Wu D."/>
            <person name="Yang S."/>
            <person name="Yao Q.A."/>
            <person name="Ye J."/>
            <person name="Yeh R.-F."/>
            <person name="Zaveri J.S."/>
            <person name="Zhan M."/>
            <person name="Zhang G."/>
            <person name="Zhao Q."/>
            <person name="Zheng L."/>
            <person name="Zheng X.H."/>
            <person name="Zhong F.N."/>
            <person name="Zhong W."/>
            <person name="Zhou X."/>
            <person name="Zhu S.C."/>
            <person name="Zhu X."/>
            <person name="Smith H.O."/>
            <person name="Gibbs R.A."/>
            <person name="Myers E.W."/>
            <person name="Rubin G.M."/>
            <person name="Venter J.C."/>
        </authorList>
    </citation>
    <scope>NUCLEOTIDE SEQUENCE [LARGE SCALE GENOMIC DNA]</scope>
    <source>
        <strain>Berkeley</strain>
    </source>
</reference>
<reference key="2">
    <citation type="journal article" date="2002" name="Genome Biol.">
        <title>Annotation of the Drosophila melanogaster euchromatic genome: a systematic review.</title>
        <authorList>
            <person name="Misra S."/>
            <person name="Crosby M.A."/>
            <person name="Mungall C.J."/>
            <person name="Matthews B.B."/>
            <person name="Campbell K.S."/>
            <person name="Hradecky P."/>
            <person name="Huang Y."/>
            <person name="Kaminker J.S."/>
            <person name="Millburn G.H."/>
            <person name="Prochnik S.E."/>
            <person name="Smith C.D."/>
            <person name="Tupy J.L."/>
            <person name="Whitfield E.J."/>
            <person name="Bayraktaroglu L."/>
            <person name="Berman B.P."/>
            <person name="Bettencourt B.R."/>
            <person name="Celniker S.E."/>
            <person name="de Grey A.D.N.J."/>
            <person name="Drysdale R.A."/>
            <person name="Harris N.L."/>
            <person name="Richter J."/>
            <person name="Russo S."/>
            <person name="Schroeder A.J."/>
            <person name="Shu S.Q."/>
            <person name="Stapleton M."/>
            <person name="Yamada C."/>
            <person name="Ashburner M."/>
            <person name="Gelbart W.M."/>
            <person name="Rubin G.M."/>
            <person name="Lewis S.E."/>
        </authorList>
    </citation>
    <scope>GENOME REANNOTATION</scope>
    <source>
        <strain>Berkeley</strain>
    </source>
</reference>
<reference key="3">
    <citation type="journal article" date="2002" name="Genome Biol.">
        <title>A Drosophila full-length cDNA resource.</title>
        <authorList>
            <person name="Stapleton M."/>
            <person name="Carlson J.W."/>
            <person name="Brokstein P."/>
            <person name="Yu C."/>
            <person name="Champe M."/>
            <person name="George R.A."/>
            <person name="Guarin H."/>
            <person name="Kronmiller B."/>
            <person name="Pacleb J.M."/>
            <person name="Park S."/>
            <person name="Wan K.H."/>
            <person name="Rubin G.M."/>
            <person name="Celniker S.E."/>
        </authorList>
    </citation>
    <scope>NUCLEOTIDE SEQUENCE [LARGE SCALE MRNA]</scope>
    <source>
        <strain>Berkeley</strain>
        <tissue>Embryo</tissue>
    </source>
</reference>
<reference key="4">
    <citation type="journal article" date="2008" name="J. Proteome Res.">
        <title>Phosphoproteome analysis of Drosophila melanogaster embryos.</title>
        <authorList>
            <person name="Zhai B."/>
            <person name="Villen J."/>
            <person name="Beausoleil S.A."/>
            <person name="Mintseris J."/>
            <person name="Gygi S.P."/>
        </authorList>
    </citation>
    <scope>PHOSPHORYLATION [LARGE SCALE ANALYSIS] AT THR-9</scope>
    <scope>IDENTIFICATION BY MASS SPECTROMETRY</scope>
    <source>
        <tissue>Embryo</tissue>
    </source>
</reference>
<evidence type="ECO:0000269" key="1">
    <source>
    </source>
</evidence>
<evidence type="ECO:0000305" key="2"/>
<name>ARMC6_DROME</name>
<keyword id="KW-0597">Phosphoprotein</keyword>
<keyword id="KW-1185">Reference proteome</keyword>
<keyword id="KW-0677">Repeat</keyword>
<dbReference type="EMBL" id="AE013599">
    <property type="protein sequence ID" value="AAF57729.1"/>
    <property type="molecule type" value="Genomic_DNA"/>
</dbReference>
<dbReference type="EMBL" id="AY052110">
    <property type="protein sequence ID" value="AAK93534.1"/>
    <property type="molecule type" value="mRNA"/>
</dbReference>
<dbReference type="RefSeq" id="NP_611306.1">
    <property type="nucleotide sequence ID" value="NM_137462.4"/>
</dbReference>
<dbReference type="SMR" id="Q7K486"/>
<dbReference type="BioGRID" id="62765">
    <property type="interactions" value="5"/>
</dbReference>
<dbReference type="FunCoup" id="Q7K486">
    <property type="interactions" value="2074"/>
</dbReference>
<dbReference type="IntAct" id="Q7K486">
    <property type="interactions" value="1"/>
</dbReference>
<dbReference type="STRING" id="7227.FBpp0085950"/>
<dbReference type="iPTMnet" id="Q7K486"/>
<dbReference type="PaxDb" id="7227-FBpp0085950"/>
<dbReference type="EnsemblMetazoa" id="FBtr0086771">
    <property type="protein sequence ID" value="FBpp0085950"/>
    <property type="gene ID" value="FBgn0034315"/>
</dbReference>
<dbReference type="GeneID" id="37084"/>
<dbReference type="KEGG" id="dme:Dmel_CG5721"/>
<dbReference type="UCSC" id="CG5721-RA">
    <property type="organism name" value="d. melanogaster"/>
</dbReference>
<dbReference type="AGR" id="FB:FBgn0034315"/>
<dbReference type="FlyBase" id="FBgn0034315">
    <property type="gene designation" value="CG5721"/>
</dbReference>
<dbReference type="VEuPathDB" id="VectorBase:FBgn0034315"/>
<dbReference type="eggNOG" id="KOG4199">
    <property type="taxonomic scope" value="Eukaryota"/>
</dbReference>
<dbReference type="GeneTree" id="ENSGT00390000002913"/>
<dbReference type="HOGENOM" id="CLU_039447_1_0_1"/>
<dbReference type="InParanoid" id="Q7K486"/>
<dbReference type="OMA" id="THKQPDL"/>
<dbReference type="OrthoDB" id="449062at2759"/>
<dbReference type="PhylomeDB" id="Q7K486"/>
<dbReference type="BioGRID-ORCS" id="37084">
    <property type="hits" value="0 hits in 1 CRISPR screen"/>
</dbReference>
<dbReference type="GenomeRNAi" id="37084"/>
<dbReference type="PRO" id="PR:Q7K486"/>
<dbReference type="Proteomes" id="UP000000803">
    <property type="component" value="Chromosome 2R"/>
</dbReference>
<dbReference type="Bgee" id="FBgn0034315">
    <property type="expression patterns" value="Expressed in saliva-secreting gland and 97 other cell types or tissues"/>
</dbReference>
<dbReference type="GO" id="GO:0009653">
    <property type="term" value="P:anatomical structure morphogenesis"/>
    <property type="evidence" value="ECO:0007669"/>
    <property type="project" value="UniProtKB-ARBA"/>
</dbReference>
<dbReference type="GO" id="GO:0002244">
    <property type="term" value="P:hematopoietic progenitor cell differentiation"/>
    <property type="evidence" value="ECO:0000318"/>
    <property type="project" value="GO_Central"/>
</dbReference>
<dbReference type="FunFam" id="1.25.10.10:FF:001008">
    <property type="entry name" value="GD25408"/>
    <property type="match status" value="1"/>
</dbReference>
<dbReference type="Gene3D" id="1.25.10.10">
    <property type="entry name" value="Leucine-rich Repeat Variant"/>
    <property type="match status" value="1"/>
</dbReference>
<dbReference type="InterPro" id="IPR011989">
    <property type="entry name" value="ARM-like"/>
</dbReference>
<dbReference type="InterPro" id="IPR016024">
    <property type="entry name" value="ARM-type_fold"/>
</dbReference>
<dbReference type="InterPro" id="IPR000225">
    <property type="entry name" value="Armadillo"/>
</dbReference>
<dbReference type="PANTHER" id="PTHR22895">
    <property type="entry name" value="ARMADILLO REPEAT-CONTAINING PROTEIN 6"/>
    <property type="match status" value="1"/>
</dbReference>
<dbReference type="PANTHER" id="PTHR22895:SF0">
    <property type="entry name" value="ARMADILLO REPEAT-CONTAINING PROTEIN 6"/>
    <property type="match status" value="1"/>
</dbReference>
<dbReference type="SMART" id="SM00185">
    <property type="entry name" value="ARM"/>
    <property type="match status" value="4"/>
</dbReference>
<dbReference type="SUPFAM" id="SSF48371">
    <property type="entry name" value="ARM repeat"/>
    <property type="match status" value="1"/>
</dbReference>
<feature type="chain" id="PRO_0000355638" description="Armadillo repeat-containing protein 6 homolog">
    <location>
        <begin position="1"/>
        <end position="464"/>
    </location>
</feature>
<feature type="repeat" description="ARM 1">
    <location>
        <begin position="235"/>
        <end position="275"/>
    </location>
</feature>
<feature type="repeat" description="ARM 2">
    <location>
        <begin position="287"/>
        <end position="331"/>
    </location>
</feature>
<feature type="repeat" description="ARM 3">
    <location>
        <begin position="332"/>
        <end position="374"/>
    </location>
</feature>
<feature type="repeat" description="ARM 4">
    <location>
        <begin position="375"/>
        <end position="418"/>
    </location>
</feature>
<feature type="modified residue" description="Phosphothreonine" evidence="1">
    <location>
        <position position="9"/>
    </location>
</feature>
<gene>
    <name type="ORF">CG5721</name>
</gene>